<comment type="interaction">
    <interactant intactId="EBI-6401975">
        <id>O84673</id>
    </interactant>
    <interactant intactId="EBI-6401975">
        <id>O84673</id>
        <label>CT_666</label>
    </interactant>
    <organismsDiffer>false</organismsDiffer>
    <experiments>2</experiments>
</comment>
<comment type="similarity">
    <text evidence="1">Belongs to the chlamydial CPn_0710/CT_666/TC_0037 family.</text>
</comment>
<reference key="1">
    <citation type="journal article" date="1998" name="Science">
        <title>Genome sequence of an obligate intracellular pathogen of humans: Chlamydia trachomatis.</title>
        <authorList>
            <person name="Stephens R.S."/>
            <person name="Kalman S."/>
            <person name="Lammel C.J."/>
            <person name="Fan J."/>
            <person name="Marathe R."/>
            <person name="Aravind L."/>
            <person name="Mitchell W.P."/>
            <person name="Olinger L."/>
            <person name="Tatusov R.L."/>
            <person name="Zhao Q."/>
            <person name="Koonin E.V."/>
            <person name="Davis R.W."/>
        </authorList>
    </citation>
    <scope>NUCLEOTIDE SEQUENCE [LARGE SCALE GENOMIC DNA]</scope>
    <source>
        <strain>ATCC VR-885 / DSM 19411 / UW-3/Cx</strain>
    </source>
</reference>
<keyword id="KW-1185">Reference proteome</keyword>
<protein>
    <recommendedName>
        <fullName>Uncharacterized protein CT_666</fullName>
    </recommendedName>
</protein>
<name>Y666_CHLTR</name>
<accession>O84673</accession>
<feature type="chain" id="PRO_0000218417" description="Uncharacterized protein CT_666">
    <location>
        <begin position="1"/>
        <end position="83"/>
    </location>
</feature>
<evidence type="ECO:0000305" key="1"/>
<sequence>MASGSCSAFNFNQMLDGVCKYVQGVQQYLTELETSTQGTVDLGTMFNLQFRMQILSQYMESVSNILTAVNTEMITMARAVKGS</sequence>
<dbReference type="EMBL" id="AE001273">
    <property type="protein sequence ID" value="AAC68261.1"/>
    <property type="molecule type" value="Genomic_DNA"/>
</dbReference>
<dbReference type="PIR" id="F71485">
    <property type="entry name" value="F71485"/>
</dbReference>
<dbReference type="RefSeq" id="NP_220185.1">
    <property type="nucleotide sequence ID" value="NC_000117.1"/>
</dbReference>
<dbReference type="SMR" id="O84673"/>
<dbReference type="IntAct" id="O84673">
    <property type="interactions" value="1"/>
</dbReference>
<dbReference type="STRING" id="272561.CT_666"/>
<dbReference type="EnsemblBacteria" id="AAC68261">
    <property type="protein sequence ID" value="AAC68261"/>
    <property type="gene ID" value="CT_666"/>
</dbReference>
<dbReference type="GeneID" id="884451"/>
<dbReference type="KEGG" id="ctr:CT_666"/>
<dbReference type="PATRIC" id="fig|272561.5.peg.733"/>
<dbReference type="HOGENOM" id="CLU_203071_0_0_0"/>
<dbReference type="InParanoid" id="O84673"/>
<dbReference type="OrthoDB" id="18745at2"/>
<dbReference type="Proteomes" id="UP000000431">
    <property type="component" value="Chromosome"/>
</dbReference>
<dbReference type="GO" id="GO:0042802">
    <property type="term" value="F:identical protein binding"/>
    <property type="evidence" value="ECO:0000353"/>
    <property type="project" value="IntAct"/>
</dbReference>
<dbReference type="InterPro" id="IPR035365">
    <property type="entry name" value="DUF5407"/>
</dbReference>
<dbReference type="Pfam" id="PF17401">
    <property type="entry name" value="DUF5407"/>
    <property type="match status" value="1"/>
</dbReference>
<proteinExistence type="evidence at protein level"/>
<gene>
    <name type="ordered locus">CT_666</name>
</gene>
<organism>
    <name type="scientific">Chlamydia trachomatis serovar D (strain ATCC VR-885 / DSM 19411 / UW-3/Cx)</name>
    <dbReference type="NCBI Taxonomy" id="272561"/>
    <lineage>
        <taxon>Bacteria</taxon>
        <taxon>Pseudomonadati</taxon>
        <taxon>Chlamydiota</taxon>
        <taxon>Chlamydiia</taxon>
        <taxon>Chlamydiales</taxon>
        <taxon>Chlamydiaceae</taxon>
        <taxon>Chlamydia/Chlamydophila group</taxon>
        <taxon>Chlamydia</taxon>
    </lineage>
</organism>